<proteinExistence type="evidence at protein level"/>
<comment type="function">
    <text evidence="1">Is involved in the final hydroxylation step of the post-translational modification of translation elongation factor P (EF-P) on 'Lys-34'. Acts after beta-lysylation of 'Lys-34' by EpmA and EpmB. EpmC adds an oxygen atom to the C5 position of 'Lys-34' and does not modify the added beta-lysine.</text>
</comment>
<comment type="catalytic activity">
    <reaction evidence="1">
        <text>N(6)-((3R)-3,6-diaminohexanoyl)-L-lysyl-[protein] + NADPH + O2 + H(+) = N(6)-((3R)-3,6-diaminohexanoyl)-5-hydroxy-L-lysyl-[protein] + NADP(+) + H2O</text>
        <dbReference type="Rhea" id="RHEA:83439"/>
        <dbReference type="Rhea" id="RHEA-COMP:20131"/>
        <dbReference type="Rhea" id="RHEA-COMP:20132"/>
        <dbReference type="ChEBI" id="CHEBI:15377"/>
        <dbReference type="ChEBI" id="CHEBI:15378"/>
        <dbReference type="ChEBI" id="CHEBI:15379"/>
        <dbReference type="ChEBI" id="CHEBI:57783"/>
        <dbReference type="ChEBI" id="CHEBI:58349"/>
        <dbReference type="ChEBI" id="CHEBI:156053"/>
        <dbReference type="ChEBI" id="CHEBI:156054"/>
    </reaction>
    <physiologicalReaction direction="left-to-right" evidence="1">
        <dbReference type="Rhea" id="RHEA:83440"/>
    </physiologicalReaction>
</comment>
<comment type="activity regulation">
    <text evidence="1">Hydroxylation activity is abolished by NADP and increased by NADPH.</text>
</comment>
<comment type="disruption phenotype">
    <text evidence="1 2">EF-P proteins in the mutant strain displays a modification of +128 Da, whereas a modification of +144 Da is observed in wild-type strains. Cells lack CadA activity (lysine decarboxylase).</text>
</comment>
<comment type="similarity">
    <text evidence="3">Belongs to the EpmC family.</text>
</comment>
<accession>P76938</accession>
<accession>P76497</accession>
<reference key="1">
    <citation type="journal article" date="1997" name="DNA Res.">
        <title>Construction of a contiguous 874-kb sequence of the Escherichia coli-K12 genome corresponding to 50.0-68.8 min on the linkage map and analysis of its sequence features.</title>
        <authorList>
            <person name="Yamamoto Y."/>
            <person name="Aiba H."/>
            <person name="Baba T."/>
            <person name="Hayashi K."/>
            <person name="Inada T."/>
            <person name="Isono K."/>
            <person name="Itoh T."/>
            <person name="Kimura S."/>
            <person name="Kitagawa M."/>
            <person name="Makino K."/>
            <person name="Miki T."/>
            <person name="Mitsuhashi N."/>
            <person name="Mizobuchi K."/>
            <person name="Mori H."/>
            <person name="Nakade S."/>
            <person name="Nakamura Y."/>
            <person name="Nashimoto H."/>
            <person name="Oshima T."/>
            <person name="Oyama S."/>
            <person name="Saito N."/>
            <person name="Sampei G."/>
            <person name="Satoh Y."/>
            <person name="Sivasundaram S."/>
            <person name="Tagami H."/>
            <person name="Takahashi H."/>
            <person name="Takeda J."/>
            <person name="Takemoto K."/>
            <person name="Uehara K."/>
            <person name="Wada C."/>
            <person name="Yamagata S."/>
            <person name="Horiuchi T."/>
        </authorList>
    </citation>
    <scope>NUCLEOTIDE SEQUENCE [LARGE SCALE GENOMIC DNA]</scope>
    <source>
        <strain>K12 / W3110 / ATCC 27325 / DSM 5911</strain>
    </source>
</reference>
<reference key="2">
    <citation type="journal article" date="1997" name="Science">
        <title>The complete genome sequence of Escherichia coli K-12.</title>
        <authorList>
            <person name="Blattner F.R."/>
            <person name="Plunkett G. III"/>
            <person name="Bloch C.A."/>
            <person name="Perna N.T."/>
            <person name="Burland V."/>
            <person name="Riley M."/>
            <person name="Collado-Vides J."/>
            <person name="Glasner J.D."/>
            <person name="Rode C.K."/>
            <person name="Mayhew G.F."/>
            <person name="Gregor J."/>
            <person name="Davis N.W."/>
            <person name="Kirkpatrick H.A."/>
            <person name="Goeden M.A."/>
            <person name="Rose D.J."/>
            <person name="Mau B."/>
            <person name="Shao Y."/>
        </authorList>
    </citation>
    <scope>NUCLEOTIDE SEQUENCE [LARGE SCALE GENOMIC DNA]</scope>
    <source>
        <strain>K12 / MG1655 / ATCC 47076</strain>
    </source>
</reference>
<reference key="3">
    <citation type="journal article" date="2006" name="Mol. Syst. Biol.">
        <title>Highly accurate genome sequences of Escherichia coli K-12 strains MG1655 and W3110.</title>
        <authorList>
            <person name="Hayashi K."/>
            <person name="Morooka N."/>
            <person name="Yamamoto Y."/>
            <person name="Fujita K."/>
            <person name="Isono K."/>
            <person name="Choi S."/>
            <person name="Ohtsubo E."/>
            <person name="Baba T."/>
            <person name="Wanner B.L."/>
            <person name="Mori H."/>
            <person name="Horiuchi T."/>
        </authorList>
    </citation>
    <scope>NUCLEOTIDE SEQUENCE [LARGE SCALE GENOMIC DNA]</scope>
    <source>
        <strain>K12 / W3110 / ATCC 27325 / DSM 5911</strain>
    </source>
</reference>
<reference key="4">
    <citation type="journal article" date="2012" name="Nat. Chem. Biol.">
        <title>Lys34 of translation elongation factor EF-P is hydroxylated by YfcM.</title>
        <authorList>
            <person name="Peil L."/>
            <person name="Starosta A.L."/>
            <person name="Virumae K."/>
            <person name="Atkinson G.C."/>
            <person name="Tenson T."/>
            <person name="Remme J."/>
            <person name="Wilson D.N."/>
        </authorList>
    </citation>
    <scope>FUNCTION AS EF-P HYDROXYLASE</scope>
    <scope>CATALYTIC ACTIVITY</scope>
    <scope>ACTIVITY REGULATION</scope>
    <scope>GENE NAME</scope>
    <scope>PATHWAY</scope>
    <scope>DISRUPTION PHENOTYPE</scope>
    <source>
        <strain>K12 / AT713</strain>
        <strain>K12 / BW25113</strain>
        <strain>K12 / MC4100 / ATCC 35695 / DSM 6574</strain>
    </source>
</reference>
<reference key="5">
    <citation type="journal article" date="2013" name="Science">
        <title>Translation elongation factor EF-P alleviates ribosome stalling at polyproline stretches.</title>
        <authorList>
            <person name="Ude S."/>
            <person name="Lassak J."/>
            <person name="Starosta A.L."/>
            <person name="Kraxenberger T."/>
            <person name="Wilson D.N."/>
            <person name="Jung K."/>
        </authorList>
    </citation>
    <scope>DISRUPTION PHENOTYPE</scope>
    <source>
        <strain>K12 / BW25113</strain>
        <strain>K12 / MG1655 / ATCC 47076</strain>
    </source>
</reference>
<sequence>MNSTHHYEQLIEIFNSCFADDFNTRLIKGDDEPIYLPADAEVPYNRIVFAHGFYASAIHEISHWCIAGKARRELVDFGYWYCPDGRDAQTQSQFEDVEVKPQALDWLFCVAAGYPFNVSCDNLEGDFEPDRVVFQRRVHAQVMDYLTNGIPERPARFIKALQNYYHTPELTAEQFPWPEALN</sequence>
<gene>
    <name type="primary">epmC</name>
    <name type="synonym">yfcM</name>
    <name type="ordered locus">b2326</name>
    <name type="ordered locus">JW5381</name>
</gene>
<evidence type="ECO:0000269" key="1">
    <source>
    </source>
</evidence>
<evidence type="ECO:0000269" key="2">
    <source>
    </source>
</evidence>
<evidence type="ECO:0000305" key="3"/>
<evidence type="ECO:0000305" key="4">
    <source>
    </source>
</evidence>
<protein>
    <recommendedName>
        <fullName evidence="4">Elongation factor P lysine hydroxylase</fullName>
        <shortName evidence="4">EF-P lysine hydroxylase</shortName>
        <ecNumber evidence="1">1.14.13.-</ecNumber>
    </recommendedName>
    <alternativeName>
        <fullName>EF-P post-translational modification enzyme C</fullName>
    </alternativeName>
</protein>
<organism>
    <name type="scientific">Escherichia coli (strain K12)</name>
    <dbReference type="NCBI Taxonomy" id="83333"/>
    <lineage>
        <taxon>Bacteria</taxon>
        <taxon>Pseudomonadati</taxon>
        <taxon>Pseudomonadota</taxon>
        <taxon>Gammaproteobacteria</taxon>
        <taxon>Enterobacterales</taxon>
        <taxon>Enterobacteriaceae</taxon>
        <taxon>Escherichia</taxon>
    </lineage>
</organism>
<dbReference type="EC" id="1.14.13.-" evidence="1"/>
<dbReference type="EMBL" id="U00096">
    <property type="protein sequence ID" value="AAC75386.1"/>
    <property type="molecule type" value="Genomic_DNA"/>
</dbReference>
<dbReference type="EMBL" id="AP009048">
    <property type="protein sequence ID" value="BAA16182.2"/>
    <property type="molecule type" value="Genomic_DNA"/>
</dbReference>
<dbReference type="PIR" id="D65005">
    <property type="entry name" value="D65005"/>
</dbReference>
<dbReference type="RefSeq" id="NP_416829.1">
    <property type="nucleotide sequence ID" value="NC_000913.3"/>
</dbReference>
<dbReference type="RefSeq" id="WP_001089222.1">
    <property type="nucleotide sequence ID" value="NZ_LN832404.1"/>
</dbReference>
<dbReference type="SMR" id="P76938"/>
<dbReference type="BioGRID" id="4260792">
    <property type="interactions" value="8"/>
</dbReference>
<dbReference type="BioGRID" id="851148">
    <property type="interactions" value="4"/>
</dbReference>
<dbReference type="DIP" id="DIP-11984N"/>
<dbReference type="FunCoup" id="P76938">
    <property type="interactions" value="28"/>
</dbReference>
<dbReference type="IntAct" id="P76938">
    <property type="interactions" value="5"/>
</dbReference>
<dbReference type="STRING" id="511145.b2326"/>
<dbReference type="jPOST" id="P76938"/>
<dbReference type="PaxDb" id="511145-b2326"/>
<dbReference type="EnsemblBacteria" id="AAC75386">
    <property type="protein sequence ID" value="AAC75386"/>
    <property type="gene ID" value="b2326"/>
</dbReference>
<dbReference type="GeneID" id="946807"/>
<dbReference type="KEGG" id="ecj:JW5381"/>
<dbReference type="KEGG" id="eco:b2326"/>
<dbReference type="KEGG" id="ecoc:C3026_12960"/>
<dbReference type="PATRIC" id="fig|511145.12.peg.2422"/>
<dbReference type="EchoBASE" id="EB3869"/>
<dbReference type="eggNOG" id="COG3101">
    <property type="taxonomic scope" value="Bacteria"/>
</dbReference>
<dbReference type="HOGENOM" id="CLU_097152_0_0_6"/>
<dbReference type="InParanoid" id="P76938"/>
<dbReference type="OMA" id="TQSQFEV"/>
<dbReference type="OrthoDB" id="5298591at2"/>
<dbReference type="PhylomeDB" id="P76938"/>
<dbReference type="BioCyc" id="EcoCyc:G7201-MONOMER"/>
<dbReference type="BioCyc" id="MetaCyc:G7201-MONOMER"/>
<dbReference type="PRO" id="PR:P76938"/>
<dbReference type="Proteomes" id="UP000000625">
    <property type="component" value="Chromosome"/>
</dbReference>
<dbReference type="GO" id="GO:0046872">
    <property type="term" value="F:metal ion binding"/>
    <property type="evidence" value="ECO:0000314"/>
    <property type="project" value="EcoCyc"/>
</dbReference>
<dbReference type="GO" id="GO:0004497">
    <property type="term" value="F:monooxygenase activity"/>
    <property type="evidence" value="ECO:0000314"/>
    <property type="project" value="UniProtKB"/>
</dbReference>
<dbReference type="GO" id="GO:0016709">
    <property type="term" value="F:oxidoreductase activity, acting on paired donors, with incorporation or reduction of molecular oxygen, NAD(P)H as one donor, and incorporation of one atom of oxygen"/>
    <property type="evidence" value="ECO:0000314"/>
    <property type="project" value="EcoCyc"/>
</dbReference>
<dbReference type="GO" id="GO:0043687">
    <property type="term" value="P:post-translational protein modification"/>
    <property type="evidence" value="ECO:0000314"/>
    <property type="project" value="UniProtKB"/>
</dbReference>
<dbReference type="InterPro" id="IPR007411">
    <property type="entry name" value="EpmC"/>
</dbReference>
<dbReference type="Pfam" id="PF04315">
    <property type="entry name" value="EpmC"/>
    <property type="match status" value="1"/>
</dbReference>
<name>EPMC_ECOLI</name>
<keyword id="KW-0503">Monooxygenase</keyword>
<keyword id="KW-0560">Oxidoreductase</keyword>
<keyword id="KW-1185">Reference proteome</keyword>
<feature type="chain" id="PRO_0000169196" description="Elongation factor P lysine hydroxylase">
    <location>
        <begin position="1"/>
        <end position="182"/>
    </location>
</feature>